<feature type="chain" id="PRO_0000129275" description="Large ribosomal subunit protein uL4">
    <location>
        <begin position="1"/>
        <end position="207"/>
    </location>
</feature>
<feature type="region of interest" description="Disordered" evidence="2">
    <location>
        <begin position="50"/>
        <end position="76"/>
    </location>
</feature>
<accession>P61058</accession>
<accession>Q99S22</accession>
<protein>
    <recommendedName>
        <fullName evidence="1">Large ribosomal subunit protein uL4</fullName>
    </recommendedName>
    <alternativeName>
        <fullName evidence="3">50S ribosomal protein L4</fullName>
    </alternativeName>
</protein>
<organism>
    <name type="scientific">Staphylococcus aureus (strain Mu50 / ATCC 700699)</name>
    <dbReference type="NCBI Taxonomy" id="158878"/>
    <lineage>
        <taxon>Bacteria</taxon>
        <taxon>Bacillati</taxon>
        <taxon>Bacillota</taxon>
        <taxon>Bacilli</taxon>
        <taxon>Bacillales</taxon>
        <taxon>Staphylococcaceae</taxon>
        <taxon>Staphylococcus</taxon>
    </lineage>
</organism>
<name>RL4_STAAM</name>
<comment type="function">
    <text evidence="1">One of the primary rRNA binding proteins, this protein initially binds near the 5'-end of the 23S rRNA. It is important during the early stages of 50S assembly. It makes multiple contacts with different domains of the 23S rRNA in the assembled 50S subunit and ribosome.</text>
</comment>
<comment type="function">
    <text evidence="1">Forms part of the polypeptide exit tunnel.</text>
</comment>
<comment type="subunit">
    <text evidence="1">Part of the 50S ribosomal subunit.</text>
</comment>
<comment type="similarity">
    <text evidence="1">Belongs to the universal ribosomal protein uL4 family.</text>
</comment>
<dbReference type="EMBL" id="BA000017">
    <property type="protein sequence ID" value="BAB58411.1"/>
    <property type="molecule type" value="Genomic_DNA"/>
</dbReference>
<dbReference type="RefSeq" id="WP_000024827.1">
    <property type="nucleotide sequence ID" value="NC_002758.2"/>
</dbReference>
<dbReference type="SMR" id="P61058"/>
<dbReference type="KEGG" id="sav:SAV2249"/>
<dbReference type="HOGENOM" id="CLU_041575_5_2_9"/>
<dbReference type="PhylomeDB" id="P61058"/>
<dbReference type="Proteomes" id="UP000002481">
    <property type="component" value="Chromosome"/>
</dbReference>
<dbReference type="GO" id="GO:1990904">
    <property type="term" value="C:ribonucleoprotein complex"/>
    <property type="evidence" value="ECO:0007669"/>
    <property type="project" value="UniProtKB-KW"/>
</dbReference>
<dbReference type="GO" id="GO:0005840">
    <property type="term" value="C:ribosome"/>
    <property type="evidence" value="ECO:0007669"/>
    <property type="project" value="UniProtKB-KW"/>
</dbReference>
<dbReference type="GO" id="GO:0019843">
    <property type="term" value="F:rRNA binding"/>
    <property type="evidence" value="ECO:0007669"/>
    <property type="project" value="UniProtKB-UniRule"/>
</dbReference>
<dbReference type="GO" id="GO:0003735">
    <property type="term" value="F:structural constituent of ribosome"/>
    <property type="evidence" value="ECO:0007669"/>
    <property type="project" value="InterPro"/>
</dbReference>
<dbReference type="GO" id="GO:0006412">
    <property type="term" value="P:translation"/>
    <property type="evidence" value="ECO:0007669"/>
    <property type="project" value="UniProtKB-UniRule"/>
</dbReference>
<dbReference type="FunFam" id="3.40.1370.10:FF:000003">
    <property type="entry name" value="50S ribosomal protein L4"/>
    <property type="match status" value="1"/>
</dbReference>
<dbReference type="Gene3D" id="3.40.1370.10">
    <property type="match status" value="1"/>
</dbReference>
<dbReference type="HAMAP" id="MF_01328_B">
    <property type="entry name" value="Ribosomal_uL4_B"/>
    <property type="match status" value="1"/>
</dbReference>
<dbReference type="InterPro" id="IPR002136">
    <property type="entry name" value="Ribosomal_uL4"/>
</dbReference>
<dbReference type="InterPro" id="IPR013005">
    <property type="entry name" value="Ribosomal_uL4-like"/>
</dbReference>
<dbReference type="InterPro" id="IPR023574">
    <property type="entry name" value="Ribosomal_uL4_dom_sf"/>
</dbReference>
<dbReference type="NCBIfam" id="TIGR03953">
    <property type="entry name" value="rplD_bact"/>
    <property type="match status" value="1"/>
</dbReference>
<dbReference type="PANTHER" id="PTHR10746">
    <property type="entry name" value="50S RIBOSOMAL PROTEIN L4"/>
    <property type="match status" value="1"/>
</dbReference>
<dbReference type="PANTHER" id="PTHR10746:SF6">
    <property type="entry name" value="LARGE RIBOSOMAL SUBUNIT PROTEIN UL4M"/>
    <property type="match status" value="1"/>
</dbReference>
<dbReference type="Pfam" id="PF00573">
    <property type="entry name" value="Ribosomal_L4"/>
    <property type="match status" value="1"/>
</dbReference>
<dbReference type="SUPFAM" id="SSF52166">
    <property type="entry name" value="Ribosomal protein L4"/>
    <property type="match status" value="1"/>
</dbReference>
<sequence length="207" mass="22465">MANYDVLKLDGTKSGSIELSDAVFGIEPNNSVLFEAINLQRASLRQGTHAVKNRSAVSGGGRKPWKQKGTGRARQGTIRAPQWRGGGIVFGPTPRSYAYKMPKKMRRLALRSALSFKAQENGLTVVDAFNFEAPKTKEFKNVLSTLEQPKKVLVVTENEDVNVELSARNIPGVQVTTAQGLNVLDITNADSLVITEAAAKKVEEVLG</sequence>
<reference key="1">
    <citation type="journal article" date="2001" name="Lancet">
        <title>Whole genome sequencing of meticillin-resistant Staphylococcus aureus.</title>
        <authorList>
            <person name="Kuroda M."/>
            <person name="Ohta T."/>
            <person name="Uchiyama I."/>
            <person name="Baba T."/>
            <person name="Yuzawa H."/>
            <person name="Kobayashi I."/>
            <person name="Cui L."/>
            <person name="Oguchi A."/>
            <person name="Aoki K."/>
            <person name="Nagai Y."/>
            <person name="Lian J.-Q."/>
            <person name="Ito T."/>
            <person name="Kanamori M."/>
            <person name="Matsumaru H."/>
            <person name="Maruyama A."/>
            <person name="Murakami H."/>
            <person name="Hosoyama A."/>
            <person name="Mizutani-Ui Y."/>
            <person name="Takahashi N.K."/>
            <person name="Sawano T."/>
            <person name="Inoue R."/>
            <person name="Kaito C."/>
            <person name="Sekimizu K."/>
            <person name="Hirakawa H."/>
            <person name="Kuhara S."/>
            <person name="Goto S."/>
            <person name="Yabuzaki J."/>
            <person name="Kanehisa M."/>
            <person name="Yamashita A."/>
            <person name="Oshima K."/>
            <person name="Furuya K."/>
            <person name="Yoshino C."/>
            <person name="Shiba T."/>
            <person name="Hattori M."/>
            <person name="Ogasawara N."/>
            <person name="Hayashi H."/>
            <person name="Hiramatsu K."/>
        </authorList>
    </citation>
    <scope>NUCLEOTIDE SEQUENCE [LARGE SCALE GENOMIC DNA]</scope>
    <source>
        <strain>Mu50 / ATCC 700699</strain>
    </source>
</reference>
<keyword id="KW-0687">Ribonucleoprotein</keyword>
<keyword id="KW-0689">Ribosomal protein</keyword>
<keyword id="KW-0694">RNA-binding</keyword>
<keyword id="KW-0699">rRNA-binding</keyword>
<proteinExistence type="inferred from homology"/>
<gene>
    <name evidence="1" type="primary">rplD</name>
    <name type="ordered locus">SAV2249</name>
</gene>
<evidence type="ECO:0000255" key="1">
    <source>
        <dbReference type="HAMAP-Rule" id="MF_01328"/>
    </source>
</evidence>
<evidence type="ECO:0000256" key="2">
    <source>
        <dbReference type="SAM" id="MobiDB-lite"/>
    </source>
</evidence>
<evidence type="ECO:0000305" key="3"/>